<organism>
    <name type="scientific">Xenopus laevis</name>
    <name type="common">African clawed frog</name>
    <dbReference type="NCBI Taxonomy" id="8355"/>
    <lineage>
        <taxon>Eukaryota</taxon>
        <taxon>Metazoa</taxon>
        <taxon>Chordata</taxon>
        <taxon>Craniata</taxon>
        <taxon>Vertebrata</taxon>
        <taxon>Euteleostomi</taxon>
        <taxon>Amphibia</taxon>
        <taxon>Batrachia</taxon>
        <taxon>Anura</taxon>
        <taxon>Pipoidea</taxon>
        <taxon>Pipidae</taxon>
        <taxon>Xenopodinae</taxon>
        <taxon>Xenopus</taxon>
        <taxon>Xenopus</taxon>
    </lineage>
</organism>
<reference key="1">
    <citation type="submission" date="2003-01" db="EMBL/GenBank/DDBJ databases">
        <authorList>
            <consortium name="NIH - Xenopus Gene Collection (XGC) project"/>
        </authorList>
    </citation>
    <scope>NUCLEOTIDE SEQUENCE [LARGE SCALE MRNA]</scope>
    <source>
        <tissue>Embryo</tissue>
    </source>
</reference>
<accession>Q7ZXL5</accession>
<gene>
    <name type="primary">nell2.L</name>
</gene>
<proteinExistence type="evidence at transcript level"/>
<protein>
    <recommendedName>
        <fullName>Protein kinase C-binding protein NELL2</fullName>
    </recommendedName>
    <alternativeName>
        <fullName>NEL-like protein 2</fullName>
    </alternativeName>
</protein>
<dbReference type="EMBL" id="BC044701">
    <property type="protein sequence ID" value="AAH44701.1"/>
    <property type="molecule type" value="mRNA"/>
</dbReference>
<dbReference type="RefSeq" id="NP_001080359.1">
    <property type="nucleotide sequence ID" value="NM_001086890.1"/>
</dbReference>
<dbReference type="SMR" id="Q7ZXL5"/>
<dbReference type="GlyCosmos" id="Q7ZXL5">
    <property type="glycosylation" value="6 sites, No reported glycans"/>
</dbReference>
<dbReference type="DNASU" id="380051"/>
<dbReference type="GeneID" id="380051"/>
<dbReference type="KEGG" id="xla:380051"/>
<dbReference type="AGR" id="Xenbase:XB-GENE-852645"/>
<dbReference type="CTD" id="380051"/>
<dbReference type="Xenbase" id="XB-GENE-852645">
    <property type="gene designation" value="nell2.L"/>
</dbReference>
<dbReference type="OrthoDB" id="6516201at2759"/>
<dbReference type="Proteomes" id="UP000186698">
    <property type="component" value="Chromosome 3L"/>
</dbReference>
<dbReference type="Bgee" id="380051">
    <property type="expression patterns" value="Expressed in brain and 14 other cell types or tissues"/>
</dbReference>
<dbReference type="GO" id="GO:0005737">
    <property type="term" value="C:cytoplasm"/>
    <property type="evidence" value="ECO:0000318"/>
    <property type="project" value="GO_Central"/>
</dbReference>
<dbReference type="GO" id="GO:0005576">
    <property type="term" value="C:extracellular region"/>
    <property type="evidence" value="ECO:0000250"/>
    <property type="project" value="UniProtKB"/>
</dbReference>
<dbReference type="GO" id="GO:0005615">
    <property type="term" value="C:extracellular space"/>
    <property type="evidence" value="ECO:0000318"/>
    <property type="project" value="GO_Central"/>
</dbReference>
<dbReference type="GO" id="GO:0005509">
    <property type="term" value="F:calcium ion binding"/>
    <property type="evidence" value="ECO:0000250"/>
    <property type="project" value="UniProtKB"/>
</dbReference>
<dbReference type="GO" id="GO:0008201">
    <property type="term" value="F:heparin binding"/>
    <property type="evidence" value="ECO:0000318"/>
    <property type="project" value="GO_Central"/>
</dbReference>
<dbReference type="GO" id="GO:0005080">
    <property type="term" value="F:protein kinase C binding"/>
    <property type="evidence" value="ECO:0000318"/>
    <property type="project" value="GO_Central"/>
</dbReference>
<dbReference type="GO" id="GO:0009566">
    <property type="term" value="P:fertilization"/>
    <property type="evidence" value="ECO:0000250"/>
    <property type="project" value="UniProtKB"/>
</dbReference>
<dbReference type="CDD" id="cd00054">
    <property type="entry name" value="EGF_CA"/>
    <property type="match status" value="3"/>
</dbReference>
<dbReference type="CDD" id="cd00110">
    <property type="entry name" value="LamG"/>
    <property type="match status" value="1"/>
</dbReference>
<dbReference type="FunFam" id="2.10.25.10:FF:000038">
    <property type="entry name" value="Fibrillin 2"/>
    <property type="match status" value="2"/>
</dbReference>
<dbReference type="FunFam" id="2.10.25.10:FF:000121">
    <property type="entry name" value="Neural EGFL like 2"/>
    <property type="match status" value="1"/>
</dbReference>
<dbReference type="FunFam" id="2.10.25.10:FF:000120">
    <property type="entry name" value="Protein kinase C-binding protein NELL1"/>
    <property type="match status" value="1"/>
</dbReference>
<dbReference type="FunFam" id="2.10.25.10:FF:000211">
    <property type="entry name" value="Protein kinase C-binding protein NELL1"/>
    <property type="match status" value="1"/>
</dbReference>
<dbReference type="FunFam" id="2.60.120.200:FF:000015">
    <property type="entry name" value="protein kinase C-binding protein NELL1"/>
    <property type="match status" value="1"/>
</dbReference>
<dbReference type="FunFam" id="2.10.70.10:FF:000023">
    <property type="entry name" value="protein kinase C-binding protein NELL2"/>
    <property type="match status" value="1"/>
</dbReference>
<dbReference type="Gene3D" id="2.60.120.200">
    <property type="match status" value="1"/>
</dbReference>
<dbReference type="Gene3D" id="6.20.200.20">
    <property type="match status" value="2"/>
</dbReference>
<dbReference type="Gene3D" id="2.10.70.10">
    <property type="entry name" value="Complement Module, domain 1"/>
    <property type="match status" value="1"/>
</dbReference>
<dbReference type="Gene3D" id="2.10.25.10">
    <property type="entry name" value="Laminin"/>
    <property type="match status" value="6"/>
</dbReference>
<dbReference type="InterPro" id="IPR013320">
    <property type="entry name" value="ConA-like_dom_sf"/>
</dbReference>
<dbReference type="InterPro" id="IPR001881">
    <property type="entry name" value="EGF-like_Ca-bd_dom"/>
</dbReference>
<dbReference type="InterPro" id="IPR000742">
    <property type="entry name" value="EGF-like_dom"/>
</dbReference>
<dbReference type="InterPro" id="IPR000152">
    <property type="entry name" value="EGF-type_Asp/Asn_hydroxyl_site"/>
</dbReference>
<dbReference type="InterPro" id="IPR018097">
    <property type="entry name" value="EGF_Ca-bd_CS"/>
</dbReference>
<dbReference type="InterPro" id="IPR024731">
    <property type="entry name" value="EGF_dom"/>
</dbReference>
<dbReference type="InterPro" id="IPR009030">
    <property type="entry name" value="Growth_fac_rcpt_cys_sf"/>
</dbReference>
<dbReference type="InterPro" id="IPR001791">
    <property type="entry name" value="Laminin_G"/>
</dbReference>
<dbReference type="InterPro" id="IPR049883">
    <property type="entry name" value="NOTCH1_EGF-like"/>
</dbReference>
<dbReference type="InterPro" id="IPR051586">
    <property type="entry name" value="PKC-binding_NELL"/>
</dbReference>
<dbReference type="InterPro" id="IPR048287">
    <property type="entry name" value="TSPN-like_N"/>
</dbReference>
<dbReference type="InterPro" id="IPR001007">
    <property type="entry name" value="VWF_dom"/>
</dbReference>
<dbReference type="PANTHER" id="PTHR24042">
    <property type="entry name" value="NEL HOMOLOG"/>
    <property type="match status" value="1"/>
</dbReference>
<dbReference type="PANTHER" id="PTHR24042:SF0">
    <property type="entry name" value="PROTEIN KINASE C-BINDING PROTEIN NELL2"/>
    <property type="match status" value="1"/>
</dbReference>
<dbReference type="Pfam" id="PF12947">
    <property type="entry name" value="EGF_3"/>
    <property type="match status" value="1"/>
</dbReference>
<dbReference type="Pfam" id="PF07645">
    <property type="entry name" value="EGF_CA"/>
    <property type="match status" value="3"/>
</dbReference>
<dbReference type="Pfam" id="PF02210">
    <property type="entry name" value="Laminin_G_2"/>
    <property type="match status" value="1"/>
</dbReference>
<dbReference type="Pfam" id="PF00093">
    <property type="entry name" value="VWC"/>
    <property type="match status" value="2"/>
</dbReference>
<dbReference type="SMART" id="SM00181">
    <property type="entry name" value="EGF"/>
    <property type="match status" value="6"/>
</dbReference>
<dbReference type="SMART" id="SM00179">
    <property type="entry name" value="EGF_CA"/>
    <property type="match status" value="5"/>
</dbReference>
<dbReference type="SMART" id="SM00282">
    <property type="entry name" value="LamG"/>
    <property type="match status" value="1"/>
</dbReference>
<dbReference type="SMART" id="SM00210">
    <property type="entry name" value="TSPN"/>
    <property type="match status" value="1"/>
</dbReference>
<dbReference type="SMART" id="SM00214">
    <property type="entry name" value="VWC"/>
    <property type="match status" value="3"/>
</dbReference>
<dbReference type="SMART" id="SM00215">
    <property type="entry name" value="VWC_out"/>
    <property type="match status" value="2"/>
</dbReference>
<dbReference type="SUPFAM" id="SSF49899">
    <property type="entry name" value="Concanavalin A-like lectins/glucanases"/>
    <property type="match status" value="1"/>
</dbReference>
<dbReference type="SUPFAM" id="SSF57196">
    <property type="entry name" value="EGF/Laminin"/>
    <property type="match status" value="2"/>
</dbReference>
<dbReference type="SUPFAM" id="SSF57603">
    <property type="entry name" value="FnI-like domain"/>
    <property type="match status" value="2"/>
</dbReference>
<dbReference type="SUPFAM" id="SSF57184">
    <property type="entry name" value="Growth factor receptor domain"/>
    <property type="match status" value="1"/>
</dbReference>
<dbReference type="PROSITE" id="PS00010">
    <property type="entry name" value="ASX_HYDROXYL"/>
    <property type="match status" value="3"/>
</dbReference>
<dbReference type="PROSITE" id="PS00022">
    <property type="entry name" value="EGF_1"/>
    <property type="match status" value="1"/>
</dbReference>
<dbReference type="PROSITE" id="PS01186">
    <property type="entry name" value="EGF_2"/>
    <property type="match status" value="3"/>
</dbReference>
<dbReference type="PROSITE" id="PS50026">
    <property type="entry name" value="EGF_3"/>
    <property type="match status" value="6"/>
</dbReference>
<dbReference type="PROSITE" id="PS01187">
    <property type="entry name" value="EGF_CA"/>
    <property type="match status" value="3"/>
</dbReference>
<dbReference type="PROSITE" id="PS50025">
    <property type="entry name" value="LAM_G_DOMAIN"/>
    <property type="match status" value="1"/>
</dbReference>
<dbReference type="PROSITE" id="PS01208">
    <property type="entry name" value="VWFC_1"/>
    <property type="match status" value="2"/>
</dbReference>
<dbReference type="PROSITE" id="PS50184">
    <property type="entry name" value="VWFC_2"/>
    <property type="match status" value="3"/>
</dbReference>
<sequence>MEFILGIFCVLFCLRAGAGFGVDPSLQIDIFEDLQLGEATPGVQQVQGFHNRSKAFLFQDTSRSIKASTENAERIFQKLRNKHEFTILVTLKQAMLNSGVILSIHHSDHRYLELESSGHRNEVRLHYRSGSHRSQTEVFPYILADDKWHRFSIAISASHLVLHIDCNKIYERIVEKTFMDVPPGTALWVGQRNNVHGYFKGIMQDLQIVVMPQGFISQCPDLNRTCPTCNDFHGLVQKIMELQDILAKTSAKLSRAEQRMNRLDQCYCERSCTVKGNIYRELESWMDGCKKCTCTNGTAQCETLTCSAPNCLSGFSPAYVPGKCCKECQTVCVFQGQMYFEEEREAVYSSSGQCVLFQCKDNTMRRIESPECLPLNCPQSQHITLRNSCCKVCKGHDFCSEGHNCMGYSICKNLDDKAVCICRDGFRALREDNAYCEDIDECTEGRHYCRENTVCVNTPGSFMCVCQTGYLKIDDYSCTEHNECATNQHSCDENAMCFNTVGGHNCVCQPGYTGNGTDCRAFCKDGCRNGGTCIAPNICACPQGFTGPSCESDIDECTEGFVQCDSRANCINLPGWYHCECRDGYHDNGMFSLGGESCEDIDECATGRHSCSNDTVCFNLDGGFDCRCPHGKNCSGDCTHEGKIKHNGQIWVLENDRCSVCSCQVGLVMCRRMVCDCENPTVDLFCCPECDPRLSSQCLHQSGELTYKSGDTWVQNCQQCRCLQGEVDCWPLPCPAIDCEFSVVPESECCPRCVSDPCQADIIRNDITKTCVDETNVVRFTGSSWIKHGTECTLCQCKNGHMCCSVDPQCLQEL</sequence>
<keyword id="KW-0106">Calcium</keyword>
<keyword id="KW-1015">Disulfide bond</keyword>
<keyword id="KW-0245">EGF-like domain</keyword>
<keyword id="KW-0325">Glycoprotein</keyword>
<keyword id="KW-0479">Metal-binding</keyword>
<keyword id="KW-1185">Reference proteome</keyword>
<keyword id="KW-0677">Repeat</keyword>
<keyword id="KW-0964">Secreted</keyword>
<keyword id="KW-0732">Signal</keyword>
<evidence type="ECO:0000250" key="1">
    <source>
        <dbReference type="UniProtKB" id="Q61220"/>
    </source>
</evidence>
<evidence type="ECO:0000250" key="2">
    <source>
        <dbReference type="UniProtKB" id="Q62918"/>
    </source>
</evidence>
<evidence type="ECO:0000250" key="3">
    <source>
        <dbReference type="UniProtKB" id="Q99435"/>
    </source>
</evidence>
<evidence type="ECO:0000255" key="4"/>
<evidence type="ECO:0000255" key="5">
    <source>
        <dbReference type="PROSITE-ProRule" id="PRU00076"/>
    </source>
</evidence>
<evidence type="ECO:0000255" key="6">
    <source>
        <dbReference type="PROSITE-ProRule" id="PRU00122"/>
    </source>
</evidence>
<evidence type="ECO:0000255" key="7">
    <source>
        <dbReference type="PROSITE-ProRule" id="PRU00220"/>
    </source>
</evidence>
<comment type="function">
    <text evidence="1 2">May regulate neuronal differentiation, polarization and axon guidance.</text>
</comment>
<comment type="subunit">
    <text evidence="2">Homotrimer.</text>
</comment>
<comment type="subcellular location">
    <subcellularLocation>
        <location evidence="2">Secreted</location>
    </subcellularLocation>
</comment>
<feature type="signal peptide" evidence="3">
    <location>
        <begin position="1"/>
        <end position="19"/>
    </location>
</feature>
<feature type="chain" id="PRO_0000354684" description="Protein kinase C-binding protein NELL2">
    <location>
        <begin position="20"/>
        <end position="814"/>
    </location>
</feature>
<feature type="domain" description="Laminin G-like" evidence="6">
    <location>
        <begin position="53"/>
        <end position="226"/>
    </location>
</feature>
<feature type="domain" description="VWFC 1" evidence="7">
    <location>
        <begin position="270"/>
        <end position="329"/>
    </location>
</feature>
<feature type="domain" description="EGF-like 1" evidence="5">
    <location>
        <begin position="395"/>
        <end position="437"/>
    </location>
</feature>
<feature type="domain" description="EGF-like 2; calcium-binding" evidence="5">
    <location>
        <begin position="438"/>
        <end position="479"/>
    </location>
</feature>
<feature type="domain" description="EGF-like 3; calcium-binding" evidence="5">
    <location>
        <begin position="480"/>
        <end position="520"/>
    </location>
</feature>
<feature type="domain" description="EGF-like 4" evidence="5">
    <location>
        <begin position="521"/>
        <end position="551"/>
    </location>
</feature>
<feature type="domain" description="EGF-like 5; calcium-binding" evidence="5">
    <location>
        <begin position="553"/>
        <end position="599"/>
    </location>
</feature>
<feature type="domain" description="EGF-like 6; calcium-binding" evidence="5">
    <location>
        <begin position="600"/>
        <end position="635"/>
    </location>
</feature>
<feature type="domain" description="VWFC 2" evidence="7">
    <location>
        <begin position="636"/>
        <end position="691"/>
    </location>
</feature>
<feature type="domain" description="VWFC 3" evidence="7">
    <location>
        <begin position="696"/>
        <end position="754"/>
    </location>
</feature>
<feature type="binding site" evidence="3">
    <location>
        <position position="438"/>
    </location>
    <ligand>
        <name>Ca(2+)</name>
        <dbReference type="ChEBI" id="CHEBI:29108"/>
    </ligand>
</feature>
<feature type="binding site" evidence="3">
    <location>
        <position position="439"/>
    </location>
    <ligand>
        <name>Ca(2+)</name>
        <dbReference type="ChEBI" id="CHEBI:29108"/>
    </ligand>
</feature>
<feature type="binding site" evidence="3">
    <location>
        <position position="441"/>
    </location>
    <ligand>
        <name>Ca(2+)</name>
        <dbReference type="ChEBI" id="CHEBI:29108"/>
    </ligand>
</feature>
<feature type="binding site" evidence="3">
    <location>
        <position position="457"/>
    </location>
    <ligand>
        <name>Ca(2+)</name>
        <dbReference type="ChEBI" id="CHEBI:29108"/>
    </ligand>
</feature>
<feature type="binding site" evidence="3">
    <location>
        <position position="458"/>
    </location>
    <ligand>
        <name>Ca(2+)</name>
        <dbReference type="ChEBI" id="CHEBI:29108"/>
    </ligand>
</feature>
<feature type="binding site" evidence="3">
    <location>
        <position position="461"/>
    </location>
    <ligand>
        <name>Ca(2+)</name>
        <dbReference type="ChEBI" id="CHEBI:29108"/>
    </ligand>
</feature>
<feature type="binding site" evidence="3">
    <location>
        <position position="553"/>
    </location>
    <ligand>
        <name>Ca(2+)</name>
        <dbReference type="ChEBI" id="CHEBI:29108"/>
    </ligand>
</feature>
<feature type="binding site" evidence="3">
    <location>
        <position position="554"/>
    </location>
    <ligand>
        <name>Ca(2+)</name>
        <dbReference type="ChEBI" id="CHEBI:29108"/>
    </ligand>
</feature>
<feature type="binding site" evidence="3">
    <location>
        <position position="556"/>
    </location>
    <ligand>
        <name>Ca(2+)</name>
        <dbReference type="ChEBI" id="CHEBI:29108"/>
    </ligand>
</feature>
<feature type="binding site" evidence="3">
    <location>
        <position position="572"/>
    </location>
    <ligand>
        <name>Ca(2+)</name>
        <dbReference type="ChEBI" id="CHEBI:29108"/>
    </ligand>
</feature>
<feature type="binding site" evidence="3">
    <location>
        <position position="573"/>
    </location>
    <ligand>
        <name>Ca(2+)</name>
        <dbReference type="ChEBI" id="CHEBI:29108"/>
    </ligand>
</feature>
<feature type="binding site" evidence="3">
    <location>
        <position position="576"/>
    </location>
    <ligand>
        <name>Ca(2+)</name>
        <dbReference type="ChEBI" id="CHEBI:29108"/>
    </ligand>
</feature>
<feature type="binding site" evidence="3">
    <location>
        <position position="600"/>
    </location>
    <ligand>
        <name>Ca(2+)</name>
        <dbReference type="ChEBI" id="CHEBI:29108"/>
    </ligand>
</feature>
<feature type="binding site" evidence="3">
    <location>
        <position position="601"/>
    </location>
    <ligand>
        <name>Ca(2+)</name>
        <dbReference type="ChEBI" id="CHEBI:29108"/>
    </ligand>
</feature>
<feature type="binding site" evidence="3">
    <location>
        <position position="603"/>
    </location>
    <ligand>
        <name>Ca(2+)</name>
        <dbReference type="ChEBI" id="CHEBI:29108"/>
    </ligand>
</feature>
<feature type="binding site" evidence="3">
    <location>
        <position position="619"/>
    </location>
    <ligand>
        <name>Ca(2+)</name>
        <dbReference type="ChEBI" id="CHEBI:29108"/>
    </ligand>
</feature>
<feature type="binding site" evidence="3">
    <location>
        <position position="620"/>
    </location>
    <ligand>
        <name>Ca(2+)</name>
        <dbReference type="ChEBI" id="CHEBI:29108"/>
    </ligand>
</feature>
<feature type="binding site" evidence="3">
    <location>
        <position position="623"/>
    </location>
    <ligand>
        <name>Ca(2+)</name>
        <dbReference type="ChEBI" id="CHEBI:29108"/>
    </ligand>
</feature>
<feature type="glycosylation site" description="N-linked (GlcNAc...) asparagine" evidence="4">
    <location>
        <position position="51"/>
    </location>
</feature>
<feature type="glycosylation site" description="N-linked (GlcNAc...) asparagine" evidence="4">
    <location>
        <position position="223"/>
    </location>
</feature>
<feature type="glycosylation site" description="N-linked (GlcNAc...) asparagine" evidence="4">
    <location>
        <position position="296"/>
    </location>
</feature>
<feature type="glycosylation site" description="N-linked (GlcNAc...) asparagine" evidence="4">
    <location>
        <position position="515"/>
    </location>
</feature>
<feature type="glycosylation site" description="N-linked (GlcNAc...) asparagine" evidence="4">
    <location>
        <position position="613"/>
    </location>
</feature>
<feature type="glycosylation site" description="N-linked (GlcNAc...) asparagine" evidence="4">
    <location>
        <position position="633"/>
    </location>
</feature>
<feature type="disulfide bond" evidence="3">
    <location>
        <begin position="399"/>
        <end position="411"/>
    </location>
</feature>
<feature type="disulfide bond" evidence="3">
    <location>
        <begin position="405"/>
        <end position="420"/>
    </location>
</feature>
<feature type="disulfide bond" evidence="3">
    <location>
        <begin position="422"/>
        <end position="436"/>
    </location>
</feature>
<feature type="disulfide bond" evidence="3">
    <location>
        <begin position="442"/>
        <end position="455"/>
    </location>
</feature>
<feature type="disulfide bond" evidence="3">
    <location>
        <begin position="449"/>
        <end position="464"/>
    </location>
</feature>
<feature type="disulfide bond" evidence="3">
    <location>
        <begin position="466"/>
        <end position="478"/>
    </location>
</feature>
<feature type="disulfide bond" evidence="3">
    <location>
        <begin position="484"/>
        <end position="497"/>
    </location>
</feature>
<feature type="disulfide bond" evidence="3">
    <location>
        <begin position="491"/>
        <end position="506"/>
    </location>
</feature>
<feature type="disulfide bond" evidence="3">
    <location>
        <begin position="508"/>
        <end position="519"/>
    </location>
</feature>
<feature type="disulfide bond" evidence="3">
    <location>
        <begin position="523"/>
        <end position="533"/>
    </location>
</feature>
<feature type="disulfide bond" evidence="3">
    <location>
        <begin position="527"/>
        <end position="539"/>
    </location>
</feature>
<feature type="disulfide bond" evidence="3">
    <location>
        <begin position="541"/>
        <end position="550"/>
    </location>
</feature>
<feature type="disulfide bond" evidence="3">
    <location>
        <begin position="557"/>
        <end position="570"/>
    </location>
</feature>
<feature type="disulfide bond" evidence="3">
    <location>
        <begin position="564"/>
        <end position="579"/>
    </location>
</feature>
<feature type="disulfide bond" evidence="3">
    <location>
        <begin position="581"/>
        <end position="598"/>
    </location>
</feature>
<feature type="disulfide bond" evidence="3">
    <location>
        <begin position="604"/>
        <end position="617"/>
    </location>
</feature>
<feature type="disulfide bond" evidence="3">
    <location>
        <begin position="611"/>
        <end position="626"/>
    </location>
</feature>
<feature type="disulfide bond" evidence="3">
    <location>
        <begin position="628"/>
        <end position="634"/>
    </location>
</feature>
<name>NELL2_XENLA</name>